<name>DXS_ALKOO</name>
<organism>
    <name type="scientific">Alkaliphilus oremlandii (strain OhILAs)</name>
    <name type="common">Clostridium oremlandii (strain OhILAs)</name>
    <dbReference type="NCBI Taxonomy" id="350688"/>
    <lineage>
        <taxon>Bacteria</taxon>
        <taxon>Bacillati</taxon>
        <taxon>Bacillota</taxon>
        <taxon>Clostridia</taxon>
        <taxon>Peptostreptococcales</taxon>
        <taxon>Natronincolaceae</taxon>
        <taxon>Alkaliphilus</taxon>
    </lineage>
</organism>
<gene>
    <name evidence="1" type="primary">dxs</name>
    <name type="ordered locus">Clos_1607</name>
</gene>
<accession>A8MFI7</accession>
<evidence type="ECO:0000255" key="1">
    <source>
        <dbReference type="HAMAP-Rule" id="MF_00315"/>
    </source>
</evidence>
<reference key="1">
    <citation type="submission" date="2007-10" db="EMBL/GenBank/DDBJ databases">
        <title>Complete genome of Alkaliphilus oremlandii OhILAs.</title>
        <authorList>
            <person name="Copeland A."/>
            <person name="Lucas S."/>
            <person name="Lapidus A."/>
            <person name="Barry K."/>
            <person name="Detter J.C."/>
            <person name="Glavina del Rio T."/>
            <person name="Hammon N."/>
            <person name="Israni S."/>
            <person name="Dalin E."/>
            <person name="Tice H."/>
            <person name="Pitluck S."/>
            <person name="Chain P."/>
            <person name="Malfatti S."/>
            <person name="Shin M."/>
            <person name="Vergez L."/>
            <person name="Schmutz J."/>
            <person name="Larimer F."/>
            <person name="Land M."/>
            <person name="Hauser L."/>
            <person name="Kyrpides N."/>
            <person name="Mikhailova N."/>
            <person name="Stolz J.F."/>
            <person name="Dawson A."/>
            <person name="Fisher E."/>
            <person name="Crable B."/>
            <person name="Perera E."/>
            <person name="Lisak J."/>
            <person name="Ranganathan M."/>
            <person name="Basu P."/>
            <person name="Richardson P."/>
        </authorList>
    </citation>
    <scope>NUCLEOTIDE SEQUENCE [LARGE SCALE GENOMIC DNA]</scope>
    <source>
        <strain>OhILAs</strain>
    </source>
</reference>
<dbReference type="EC" id="2.2.1.7" evidence="1"/>
<dbReference type="EMBL" id="CP000853">
    <property type="protein sequence ID" value="ABW19150.1"/>
    <property type="molecule type" value="Genomic_DNA"/>
</dbReference>
<dbReference type="RefSeq" id="WP_012159462.1">
    <property type="nucleotide sequence ID" value="NC_009922.1"/>
</dbReference>
<dbReference type="SMR" id="A8MFI7"/>
<dbReference type="STRING" id="350688.Clos_1607"/>
<dbReference type="KEGG" id="aoe:Clos_1607"/>
<dbReference type="eggNOG" id="COG1154">
    <property type="taxonomic scope" value="Bacteria"/>
</dbReference>
<dbReference type="HOGENOM" id="CLU_009227_1_4_9"/>
<dbReference type="OrthoDB" id="9803371at2"/>
<dbReference type="UniPathway" id="UPA00064">
    <property type="reaction ID" value="UER00091"/>
</dbReference>
<dbReference type="Proteomes" id="UP000000269">
    <property type="component" value="Chromosome"/>
</dbReference>
<dbReference type="GO" id="GO:0005829">
    <property type="term" value="C:cytosol"/>
    <property type="evidence" value="ECO:0007669"/>
    <property type="project" value="TreeGrafter"/>
</dbReference>
<dbReference type="GO" id="GO:0008661">
    <property type="term" value="F:1-deoxy-D-xylulose-5-phosphate synthase activity"/>
    <property type="evidence" value="ECO:0007669"/>
    <property type="project" value="UniProtKB-UniRule"/>
</dbReference>
<dbReference type="GO" id="GO:0000287">
    <property type="term" value="F:magnesium ion binding"/>
    <property type="evidence" value="ECO:0007669"/>
    <property type="project" value="UniProtKB-UniRule"/>
</dbReference>
<dbReference type="GO" id="GO:0030976">
    <property type="term" value="F:thiamine pyrophosphate binding"/>
    <property type="evidence" value="ECO:0007669"/>
    <property type="project" value="UniProtKB-UniRule"/>
</dbReference>
<dbReference type="GO" id="GO:0052865">
    <property type="term" value="P:1-deoxy-D-xylulose 5-phosphate biosynthetic process"/>
    <property type="evidence" value="ECO:0007669"/>
    <property type="project" value="UniProtKB-UniPathway"/>
</dbReference>
<dbReference type="GO" id="GO:0019288">
    <property type="term" value="P:isopentenyl diphosphate biosynthetic process, methylerythritol 4-phosphate pathway"/>
    <property type="evidence" value="ECO:0007669"/>
    <property type="project" value="TreeGrafter"/>
</dbReference>
<dbReference type="GO" id="GO:0016114">
    <property type="term" value="P:terpenoid biosynthetic process"/>
    <property type="evidence" value="ECO:0007669"/>
    <property type="project" value="UniProtKB-UniRule"/>
</dbReference>
<dbReference type="GO" id="GO:0009228">
    <property type="term" value="P:thiamine biosynthetic process"/>
    <property type="evidence" value="ECO:0007669"/>
    <property type="project" value="UniProtKB-UniRule"/>
</dbReference>
<dbReference type="CDD" id="cd02007">
    <property type="entry name" value="TPP_DXS"/>
    <property type="match status" value="1"/>
</dbReference>
<dbReference type="CDD" id="cd07033">
    <property type="entry name" value="TPP_PYR_DXS_TK_like"/>
    <property type="match status" value="1"/>
</dbReference>
<dbReference type="FunFam" id="3.40.50.920:FF:000002">
    <property type="entry name" value="1-deoxy-D-xylulose-5-phosphate synthase"/>
    <property type="match status" value="1"/>
</dbReference>
<dbReference type="FunFam" id="3.40.50.970:FF:000005">
    <property type="entry name" value="1-deoxy-D-xylulose-5-phosphate synthase"/>
    <property type="match status" value="1"/>
</dbReference>
<dbReference type="Gene3D" id="3.40.50.920">
    <property type="match status" value="1"/>
</dbReference>
<dbReference type="Gene3D" id="3.40.50.970">
    <property type="match status" value="2"/>
</dbReference>
<dbReference type="HAMAP" id="MF_00315">
    <property type="entry name" value="DXP_synth"/>
    <property type="match status" value="1"/>
</dbReference>
<dbReference type="InterPro" id="IPR005477">
    <property type="entry name" value="Dxylulose-5-P_synthase"/>
</dbReference>
<dbReference type="InterPro" id="IPR029061">
    <property type="entry name" value="THDP-binding"/>
</dbReference>
<dbReference type="InterPro" id="IPR009014">
    <property type="entry name" value="Transketo_C/PFOR_II"/>
</dbReference>
<dbReference type="InterPro" id="IPR005475">
    <property type="entry name" value="Transketolase-like_Pyr-bd"/>
</dbReference>
<dbReference type="InterPro" id="IPR020826">
    <property type="entry name" value="Transketolase_BS"/>
</dbReference>
<dbReference type="InterPro" id="IPR033248">
    <property type="entry name" value="Transketolase_C"/>
</dbReference>
<dbReference type="InterPro" id="IPR049557">
    <property type="entry name" value="Transketolase_CS"/>
</dbReference>
<dbReference type="NCBIfam" id="TIGR00204">
    <property type="entry name" value="dxs"/>
    <property type="match status" value="1"/>
</dbReference>
<dbReference type="NCBIfam" id="NF003933">
    <property type="entry name" value="PRK05444.2-2"/>
    <property type="match status" value="1"/>
</dbReference>
<dbReference type="PANTHER" id="PTHR43322">
    <property type="entry name" value="1-D-DEOXYXYLULOSE 5-PHOSPHATE SYNTHASE-RELATED"/>
    <property type="match status" value="1"/>
</dbReference>
<dbReference type="PANTHER" id="PTHR43322:SF5">
    <property type="entry name" value="1-DEOXY-D-XYLULOSE-5-PHOSPHATE SYNTHASE, CHLOROPLASTIC"/>
    <property type="match status" value="1"/>
</dbReference>
<dbReference type="Pfam" id="PF13292">
    <property type="entry name" value="DXP_synthase_N"/>
    <property type="match status" value="1"/>
</dbReference>
<dbReference type="Pfam" id="PF02779">
    <property type="entry name" value="Transket_pyr"/>
    <property type="match status" value="1"/>
</dbReference>
<dbReference type="Pfam" id="PF02780">
    <property type="entry name" value="Transketolase_C"/>
    <property type="match status" value="1"/>
</dbReference>
<dbReference type="SMART" id="SM00861">
    <property type="entry name" value="Transket_pyr"/>
    <property type="match status" value="1"/>
</dbReference>
<dbReference type="SUPFAM" id="SSF52518">
    <property type="entry name" value="Thiamin diphosphate-binding fold (THDP-binding)"/>
    <property type="match status" value="2"/>
</dbReference>
<dbReference type="SUPFAM" id="SSF52922">
    <property type="entry name" value="TK C-terminal domain-like"/>
    <property type="match status" value="1"/>
</dbReference>
<dbReference type="PROSITE" id="PS00801">
    <property type="entry name" value="TRANSKETOLASE_1"/>
    <property type="match status" value="1"/>
</dbReference>
<dbReference type="PROSITE" id="PS00802">
    <property type="entry name" value="TRANSKETOLASE_2"/>
    <property type="match status" value="1"/>
</dbReference>
<comment type="function">
    <text evidence="1">Catalyzes the acyloin condensation reaction between C atoms 2 and 3 of pyruvate and glyceraldehyde 3-phosphate to yield 1-deoxy-D-xylulose-5-phosphate (DXP).</text>
</comment>
<comment type="catalytic activity">
    <reaction evidence="1">
        <text>D-glyceraldehyde 3-phosphate + pyruvate + H(+) = 1-deoxy-D-xylulose 5-phosphate + CO2</text>
        <dbReference type="Rhea" id="RHEA:12605"/>
        <dbReference type="ChEBI" id="CHEBI:15361"/>
        <dbReference type="ChEBI" id="CHEBI:15378"/>
        <dbReference type="ChEBI" id="CHEBI:16526"/>
        <dbReference type="ChEBI" id="CHEBI:57792"/>
        <dbReference type="ChEBI" id="CHEBI:59776"/>
        <dbReference type="EC" id="2.2.1.7"/>
    </reaction>
</comment>
<comment type="cofactor">
    <cofactor evidence="1">
        <name>Mg(2+)</name>
        <dbReference type="ChEBI" id="CHEBI:18420"/>
    </cofactor>
    <text evidence="1">Binds 1 Mg(2+) ion per subunit.</text>
</comment>
<comment type="cofactor">
    <cofactor evidence="1">
        <name>thiamine diphosphate</name>
        <dbReference type="ChEBI" id="CHEBI:58937"/>
    </cofactor>
    <text evidence="1">Binds 1 thiamine pyrophosphate per subunit.</text>
</comment>
<comment type="pathway">
    <text evidence="1">Metabolic intermediate biosynthesis; 1-deoxy-D-xylulose 5-phosphate biosynthesis; 1-deoxy-D-xylulose 5-phosphate from D-glyceraldehyde 3-phosphate and pyruvate: step 1/1.</text>
</comment>
<comment type="subunit">
    <text evidence="1">Homodimer.</text>
</comment>
<comment type="similarity">
    <text evidence="1">Belongs to the transketolase family. DXPS subfamily.</text>
</comment>
<protein>
    <recommendedName>
        <fullName evidence="1">1-deoxy-D-xylulose-5-phosphate synthase</fullName>
        <ecNumber evidence="1">2.2.1.7</ecNumber>
    </recommendedName>
    <alternativeName>
        <fullName evidence="1">1-deoxyxylulose-5-phosphate synthase</fullName>
        <shortName evidence="1">DXP synthase</shortName>
        <shortName evidence="1">DXPS</shortName>
    </alternativeName>
</protein>
<feature type="chain" id="PRO_1000059442" description="1-deoxy-D-xylulose-5-phosphate synthase">
    <location>
        <begin position="1"/>
        <end position="624"/>
    </location>
</feature>
<feature type="binding site" evidence="1">
    <location>
        <position position="74"/>
    </location>
    <ligand>
        <name>thiamine diphosphate</name>
        <dbReference type="ChEBI" id="CHEBI:58937"/>
    </ligand>
</feature>
<feature type="binding site" evidence="1">
    <location>
        <begin position="115"/>
        <end position="117"/>
    </location>
    <ligand>
        <name>thiamine diphosphate</name>
        <dbReference type="ChEBI" id="CHEBI:58937"/>
    </ligand>
</feature>
<feature type="binding site" evidence="1">
    <location>
        <position position="146"/>
    </location>
    <ligand>
        <name>Mg(2+)</name>
        <dbReference type="ChEBI" id="CHEBI:18420"/>
    </ligand>
</feature>
<feature type="binding site" evidence="1">
    <location>
        <begin position="147"/>
        <end position="148"/>
    </location>
    <ligand>
        <name>thiamine diphosphate</name>
        <dbReference type="ChEBI" id="CHEBI:58937"/>
    </ligand>
</feature>
<feature type="binding site" evidence="1">
    <location>
        <position position="175"/>
    </location>
    <ligand>
        <name>Mg(2+)</name>
        <dbReference type="ChEBI" id="CHEBI:18420"/>
    </ligand>
</feature>
<feature type="binding site" evidence="1">
    <location>
        <position position="175"/>
    </location>
    <ligand>
        <name>thiamine diphosphate</name>
        <dbReference type="ChEBI" id="CHEBI:58937"/>
    </ligand>
</feature>
<feature type="binding site" evidence="1">
    <location>
        <position position="286"/>
    </location>
    <ligand>
        <name>thiamine diphosphate</name>
        <dbReference type="ChEBI" id="CHEBI:58937"/>
    </ligand>
</feature>
<feature type="binding site" evidence="1">
    <location>
        <position position="367"/>
    </location>
    <ligand>
        <name>thiamine diphosphate</name>
        <dbReference type="ChEBI" id="CHEBI:58937"/>
    </ligand>
</feature>
<sequence>MYKYLMEINSIEDFKKLNSNEIKVLAEEIRHFLIESVSKTGGHLASNLGVVELTLALHQAFNSPEDKIIWDVGHQAYVHKILTGRRDQFSTLRQYKGLSGFPKRYESEHDQFDTGHSSTSISAAMGLATARDLNKDKYKVIAVIGDGAMTGGMAFEALNHIGQSQKDIIVILNDNEMSISPNVGGLSNYLNKIRTAPIYSKVKDDVEYLISNIPAIGKSVMKTAEKAKDSIKYFFVPGVLFEELGFTYIGPVDGHNYHSLYDVMNRTKNIKGPVLLHVMTTKGKGYTLAEKHPDKYHGVNSFHIETGEPISCNENLSYSEIAGKTLVECAAEDEKIVAITAAMPSGTGLNNFAKKHPERFFDVGIAEQHAATFAAGLAANGFKPFFAVYSTFFQRAYDQVIHDACIQDLPVTYLIDRAGLVGNDGETHHGSLDISFLSCIPNLTFMAPKDGIELSEMVRFAAKHNGPVAIRYPRGHSNMDSQENFSPLALGKGEITYHSGNDVLILALGTFNKMGLEICKDLEENNIFSTLMNPRFIKPMDEELIVEMVQKHKIIYTIEDNSKIGGFGTLVQVLLNDNQILKPVKVCALPDRFIEHGNVEDLYEELGLTKKQIVDQIKKEFSDL</sequence>
<proteinExistence type="inferred from homology"/>
<keyword id="KW-0414">Isoprene biosynthesis</keyword>
<keyword id="KW-0460">Magnesium</keyword>
<keyword id="KW-0479">Metal-binding</keyword>
<keyword id="KW-1185">Reference proteome</keyword>
<keyword id="KW-0784">Thiamine biosynthesis</keyword>
<keyword id="KW-0786">Thiamine pyrophosphate</keyword>
<keyword id="KW-0808">Transferase</keyword>